<comment type="function">
    <text evidence="1">Endonuclease that specifically degrades the RNA of RNA-DNA hybrids.</text>
</comment>
<comment type="catalytic activity">
    <reaction evidence="1">
        <text>Endonucleolytic cleavage to 5'-phosphomonoester.</text>
        <dbReference type="EC" id="3.1.26.4"/>
    </reaction>
</comment>
<comment type="cofactor">
    <cofactor evidence="1">
        <name>Mn(2+)</name>
        <dbReference type="ChEBI" id="CHEBI:29035"/>
    </cofactor>
    <cofactor evidence="1">
        <name>Mg(2+)</name>
        <dbReference type="ChEBI" id="CHEBI:18420"/>
    </cofactor>
    <text evidence="1">Manganese or magnesium. Binds 1 divalent metal ion per monomer in the absence of substrate. May bind a second metal ion after substrate binding.</text>
</comment>
<comment type="subcellular location">
    <subcellularLocation>
        <location evidence="1">Cytoplasm</location>
    </subcellularLocation>
</comment>
<comment type="similarity">
    <text evidence="1">Belongs to the RNase HII family. RnhC subfamily.</text>
</comment>
<feature type="chain" id="PRO_1000031234" description="Ribonuclease HIII">
    <location>
        <begin position="1"/>
        <end position="308"/>
    </location>
</feature>
<feature type="domain" description="RNase H type-2" evidence="2">
    <location>
        <begin position="92"/>
        <end position="308"/>
    </location>
</feature>
<feature type="binding site" evidence="1">
    <location>
        <position position="98"/>
    </location>
    <ligand>
        <name>a divalent metal cation</name>
        <dbReference type="ChEBI" id="CHEBI:60240"/>
    </ligand>
</feature>
<feature type="binding site" evidence="1">
    <location>
        <position position="99"/>
    </location>
    <ligand>
        <name>a divalent metal cation</name>
        <dbReference type="ChEBI" id="CHEBI:60240"/>
    </ligand>
</feature>
<feature type="binding site" evidence="1">
    <location>
        <position position="204"/>
    </location>
    <ligand>
        <name>a divalent metal cation</name>
        <dbReference type="ChEBI" id="CHEBI:60240"/>
    </ligand>
</feature>
<organism>
    <name type="scientific">Oceanobacillus iheyensis (strain DSM 14371 / CIP 107618 / JCM 11309 / KCTC 3954 / HTE831)</name>
    <dbReference type="NCBI Taxonomy" id="221109"/>
    <lineage>
        <taxon>Bacteria</taxon>
        <taxon>Bacillati</taxon>
        <taxon>Bacillota</taxon>
        <taxon>Bacilli</taxon>
        <taxon>Bacillales</taxon>
        <taxon>Bacillaceae</taxon>
        <taxon>Oceanobacillus</taxon>
    </lineage>
</organism>
<sequence length="308" mass="34433">MSQQVIVTTKEQIQKMKKYYLSQLTSTPQGAIFRAKTNNAVITAYQSGKVLFQGSAPESEASKWGNVPLNDKKKHSLEQKHSYSPQAELFTDNHIGSDEAGTGDYFGPITVAALFATKEQQLKLKQIGVRDSKHLNDTKIKQIAKEIAHLQIPYSLLLLPNGKYNKLQAKGWSQGKMKAMLHHHAIDKLLQKIDVRSLKGIVIDQFCQPPVYKKYLQSEKKTLHPNTTFITKAESHSISVAAASILARARFVNAMDELSEEAKMELPKGASAKVDQTAARLIRSKGFEELDKYAKTHFANTQKAQKLL</sequence>
<proteinExistence type="inferred from homology"/>
<evidence type="ECO:0000255" key="1">
    <source>
        <dbReference type="HAMAP-Rule" id="MF_00053"/>
    </source>
</evidence>
<evidence type="ECO:0000255" key="2">
    <source>
        <dbReference type="PROSITE-ProRule" id="PRU01319"/>
    </source>
</evidence>
<name>RNH3_OCEIH</name>
<reference key="1">
    <citation type="journal article" date="2002" name="Nucleic Acids Res.">
        <title>Genome sequence of Oceanobacillus iheyensis isolated from the Iheya Ridge and its unexpected adaptive capabilities to extreme environments.</title>
        <authorList>
            <person name="Takami H."/>
            <person name="Takaki Y."/>
            <person name="Uchiyama I."/>
        </authorList>
    </citation>
    <scope>NUCLEOTIDE SEQUENCE [LARGE SCALE GENOMIC DNA]</scope>
    <source>
        <strain>DSM 14371 / CIP 107618 / JCM 11309 / KCTC 3954 / HTE831</strain>
    </source>
</reference>
<gene>
    <name evidence="1" type="primary">rnhC</name>
    <name type="ordered locus">OB2128</name>
</gene>
<accession>Q8EPH7</accession>
<keyword id="KW-0963">Cytoplasm</keyword>
<keyword id="KW-0255">Endonuclease</keyword>
<keyword id="KW-0378">Hydrolase</keyword>
<keyword id="KW-0460">Magnesium</keyword>
<keyword id="KW-0479">Metal-binding</keyword>
<keyword id="KW-0540">Nuclease</keyword>
<keyword id="KW-1185">Reference proteome</keyword>
<protein>
    <recommendedName>
        <fullName evidence="1">Ribonuclease HIII</fullName>
        <shortName evidence="1">RNase HIII</shortName>
        <ecNumber evidence="1">3.1.26.4</ecNumber>
    </recommendedName>
</protein>
<dbReference type="EC" id="3.1.26.4" evidence="1"/>
<dbReference type="EMBL" id="BA000028">
    <property type="protein sequence ID" value="BAC14084.1"/>
    <property type="molecule type" value="Genomic_DNA"/>
</dbReference>
<dbReference type="RefSeq" id="WP_011066522.1">
    <property type="nucleotide sequence ID" value="NC_004193.1"/>
</dbReference>
<dbReference type="SMR" id="Q8EPH7"/>
<dbReference type="STRING" id="221109.gene:10734376"/>
<dbReference type="KEGG" id="oih:OB2128"/>
<dbReference type="eggNOG" id="COG1039">
    <property type="taxonomic scope" value="Bacteria"/>
</dbReference>
<dbReference type="HOGENOM" id="CLU_059546_1_0_9"/>
<dbReference type="OrthoDB" id="9777935at2"/>
<dbReference type="PhylomeDB" id="Q8EPH7"/>
<dbReference type="Proteomes" id="UP000000822">
    <property type="component" value="Chromosome"/>
</dbReference>
<dbReference type="GO" id="GO:0005737">
    <property type="term" value="C:cytoplasm"/>
    <property type="evidence" value="ECO:0007669"/>
    <property type="project" value="UniProtKB-SubCell"/>
</dbReference>
<dbReference type="GO" id="GO:0032299">
    <property type="term" value="C:ribonuclease H2 complex"/>
    <property type="evidence" value="ECO:0007669"/>
    <property type="project" value="TreeGrafter"/>
</dbReference>
<dbReference type="GO" id="GO:0000287">
    <property type="term" value="F:magnesium ion binding"/>
    <property type="evidence" value="ECO:0007669"/>
    <property type="project" value="UniProtKB-UniRule"/>
</dbReference>
<dbReference type="GO" id="GO:0003723">
    <property type="term" value="F:RNA binding"/>
    <property type="evidence" value="ECO:0007669"/>
    <property type="project" value="InterPro"/>
</dbReference>
<dbReference type="GO" id="GO:0004523">
    <property type="term" value="F:RNA-DNA hybrid ribonuclease activity"/>
    <property type="evidence" value="ECO:0007669"/>
    <property type="project" value="UniProtKB-UniRule"/>
</dbReference>
<dbReference type="GO" id="GO:0043137">
    <property type="term" value="P:DNA replication, removal of RNA primer"/>
    <property type="evidence" value="ECO:0007669"/>
    <property type="project" value="TreeGrafter"/>
</dbReference>
<dbReference type="GO" id="GO:0006298">
    <property type="term" value="P:mismatch repair"/>
    <property type="evidence" value="ECO:0007669"/>
    <property type="project" value="TreeGrafter"/>
</dbReference>
<dbReference type="CDD" id="cd06590">
    <property type="entry name" value="RNase_HII_bacteria_HIII_like"/>
    <property type="match status" value="1"/>
</dbReference>
<dbReference type="CDD" id="cd14796">
    <property type="entry name" value="RNAse_HIII_N"/>
    <property type="match status" value="1"/>
</dbReference>
<dbReference type="FunFam" id="3.30.420.10:FF:000047">
    <property type="entry name" value="Ribonuclease HIII"/>
    <property type="match status" value="1"/>
</dbReference>
<dbReference type="Gene3D" id="3.30.420.10">
    <property type="entry name" value="Ribonuclease H-like superfamily/Ribonuclease H"/>
    <property type="match status" value="1"/>
</dbReference>
<dbReference type="Gene3D" id="3.30.310.10">
    <property type="entry name" value="TATA-Binding Protein"/>
    <property type="match status" value="1"/>
</dbReference>
<dbReference type="HAMAP" id="MF_00053">
    <property type="entry name" value="RNase_HIII"/>
    <property type="match status" value="1"/>
</dbReference>
<dbReference type="InterPro" id="IPR001352">
    <property type="entry name" value="RNase_HII/HIII"/>
</dbReference>
<dbReference type="InterPro" id="IPR024567">
    <property type="entry name" value="RNase_HII/HIII_dom"/>
</dbReference>
<dbReference type="InterPro" id="IPR004641">
    <property type="entry name" value="RNase_HIII"/>
</dbReference>
<dbReference type="InterPro" id="IPR024568">
    <property type="entry name" value="RNase_HIII_N"/>
</dbReference>
<dbReference type="InterPro" id="IPR012337">
    <property type="entry name" value="RNaseH-like_sf"/>
</dbReference>
<dbReference type="InterPro" id="IPR036397">
    <property type="entry name" value="RNaseH_sf"/>
</dbReference>
<dbReference type="InterPro" id="IPR012295">
    <property type="entry name" value="TBP_dom_sf"/>
</dbReference>
<dbReference type="NCBIfam" id="TIGR00716">
    <property type="entry name" value="rnhC"/>
    <property type="match status" value="1"/>
</dbReference>
<dbReference type="PANTHER" id="PTHR10954:SF23">
    <property type="entry name" value="RIBONUCLEASE"/>
    <property type="match status" value="1"/>
</dbReference>
<dbReference type="PANTHER" id="PTHR10954">
    <property type="entry name" value="RIBONUCLEASE H2 SUBUNIT A"/>
    <property type="match status" value="1"/>
</dbReference>
<dbReference type="Pfam" id="PF11858">
    <property type="entry name" value="DUF3378"/>
    <property type="match status" value="1"/>
</dbReference>
<dbReference type="Pfam" id="PF01351">
    <property type="entry name" value="RNase_HII"/>
    <property type="match status" value="1"/>
</dbReference>
<dbReference type="PIRSF" id="PIRSF037748">
    <property type="entry name" value="RnhC"/>
    <property type="match status" value="1"/>
</dbReference>
<dbReference type="SUPFAM" id="SSF53098">
    <property type="entry name" value="Ribonuclease H-like"/>
    <property type="match status" value="1"/>
</dbReference>
<dbReference type="PROSITE" id="PS51975">
    <property type="entry name" value="RNASE_H_2"/>
    <property type="match status" value="1"/>
</dbReference>